<keyword id="KW-0938">Abscisic acid signaling pathway</keyword>
<keyword id="KW-0479">Metal-binding</keyword>
<keyword id="KW-0539">Nucleus</keyword>
<keyword id="KW-1185">Reference proteome</keyword>
<keyword id="KW-0862">Zinc</keyword>
<keyword id="KW-0863">Zinc-finger</keyword>
<reference key="1">
    <citation type="journal article" date="1995" name="Plant Mol. Biol.">
        <title>Characterization of a family of Arabidopsis zinc finger protein cDNAs.</title>
        <authorList>
            <person name="Tague B.W."/>
            <person name="Goodman H.M."/>
        </authorList>
    </citation>
    <scope>NUCLEOTIDE SEQUENCE [MRNA]</scope>
    <source>
        <strain>cv. Landsberg erecta</strain>
        <tissue>Root</tissue>
    </source>
</reference>
<reference key="2">
    <citation type="journal article" date="2000" name="Nature">
        <title>Sequence and analysis of chromosome 1 of the plant Arabidopsis thaliana.</title>
        <authorList>
            <person name="Theologis A."/>
            <person name="Ecker J.R."/>
            <person name="Palm C.J."/>
            <person name="Federspiel N.A."/>
            <person name="Kaul S."/>
            <person name="White O."/>
            <person name="Alonso J."/>
            <person name="Altafi H."/>
            <person name="Araujo R."/>
            <person name="Bowman C.L."/>
            <person name="Brooks S.Y."/>
            <person name="Buehler E."/>
            <person name="Chan A."/>
            <person name="Chao Q."/>
            <person name="Chen H."/>
            <person name="Cheuk R.F."/>
            <person name="Chin C.W."/>
            <person name="Chung M.K."/>
            <person name="Conn L."/>
            <person name="Conway A.B."/>
            <person name="Conway A.R."/>
            <person name="Creasy T.H."/>
            <person name="Dewar K."/>
            <person name="Dunn P."/>
            <person name="Etgu P."/>
            <person name="Feldblyum T.V."/>
            <person name="Feng J.-D."/>
            <person name="Fong B."/>
            <person name="Fujii C.Y."/>
            <person name="Gill J.E."/>
            <person name="Goldsmith A.D."/>
            <person name="Haas B."/>
            <person name="Hansen N.F."/>
            <person name="Hughes B."/>
            <person name="Huizar L."/>
            <person name="Hunter J.L."/>
            <person name="Jenkins J."/>
            <person name="Johnson-Hopson C."/>
            <person name="Khan S."/>
            <person name="Khaykin E."/>
            <person name="Kim C.J."/>
            <person name="Koo H.L."/>
            <person name="Kremenetskaia I."/>
            <person name="Kurtz D.B."/>
            <person name="Kwan A."/>
            <person name="Lam B."/>
            <person name="Langin-Hooper S."/>
            <person name="Lee A."/>
            <person name="Lee J.M."/>
            <person name="Lenz C.A."/>
            <person name="Li J.H."/>
            <person name="Li Y.-P."/>
            <person name="Lin X."/>
            <person name="Liu S.X."/>
            <person name="Liu Z.A."/>
            <person name="Luros J.S."/>
            <person name="Maiti R."/>
            <person name="Marziali A."/>
            <person name="Militscher J."/>
            <person name="Miranda M."/>
            <person name="Nguyen M."/>
            <person name="Nierman W.C."/>
            <person name="Osborne B.I."/>
            <person name="Pai G."/>
            <person name="Peterson J."/>
            <person name="Pham P.K."/>
            <person name="Rizzo M."/>
            <person name="Rooney T."/>
            <person name="Rowley D."/>
            <person name="Sakano H."/>
            <person name="Salzberg S.L."/>
            <person name="Schwartz J.R."/>
            <person name="Shinn P."/>
            <person name="Southwick A.M."/>
            <person name="Sun H."/>
            <person name="Tallon L.J."/>
            <person name="Tambunga G."/>
            <person name="Toriumi M.J."/>
            <person name="Town C.D."/>
            <person name="Utterback T."/>
            <person name="Van Aken S."/>
            <person name="Vaysberg M."/>
            <person name="Vysotskaia V.S."/>
            <person name="Walker M."/>
            <person name="Wu D."/>
            <person name="Yu G."/>
            <person name="Fraser C.M."/>
            <person name="Venter J.C."/>
            <person name="Davis R.W."/>
        </authorList>
    </citation>
    <scope>NUCLEOTIDE SEQUENCE [LARGE SCALE GENOMIC DNA]</scope>
    <source>
        <strain>cv. Columbia</strain>
    </source>
</reference>
<reference key="3">
    <citation type="journal article" date="2017" name="Plant J.">
        <title>Araport11: a complete reannotation of the Arabidopsis thaliana reference genome.</title>
        <authorList>
            <person name="Cheng C.Y."/>
            <person name="Krishnakumar V."/>
            <person name="Chan A.P."/>
            <person name="Thibaud-Nissen F."/>
            <person name="Schobel S."/>
            <person name="Town C.D."/>
        </authorList>
    </citation>
    <scope>GENOME REANNOTATION</scope>
    <source>
        <strain>cv. Columbia</strain>
    </source>
</reference>
<reference key="4">
    <citation type="journal article" date="2003" name="Science">
        <title>Empirical analysis of transcriptional activity in the Arabidopsis genome.</title>
        <authorList>
            <person name="Yamada K."/>
            <person name="Lim J."/>
            <person name="Dale J.M."/>
            <person name="Chen H."/>
            <person name="Shinn P."/>
            <person name="Palm C.J."/>
            <person name="Southwick A.M."/>
            <person name="Wu H.C."/>
            <person name="Kim C.J."/>
            <person name="Nguyen M."/>
            <person name="Pham P.K."/>
            <person name="Cheuk R.F."/>
            <person name="Karlin-Newmann G."/>
            <person name="Liu S.X."/>
            <person name="Lam B."/>
            <person name="Sakano H."/>
            <person name="Wu T."/>
            <person name="Yu G."/>
            <person name="Miranda M."/>
            <person name="Quach H.L."/>
            <person name="Tripp M."/>
            <person name="Chang C.H."/>
            <person name="Lee J.M."/>
            <person name="Toriumi M.J."/>
            <person name="Chan M.M."/>
            <person name="Tang C.C."/>
            <person name="Onodera C.S."/>
            <person name="Deng J.M."/>
            <person name="Akiyama K."/>
            <person name="Ansari Y."/>
            <person name="Arakawa T."/>
            <person name="Banh J."/>
            <person name="Banno F."/>
            <person name="Bowser L."/>
            <person name="Brooks S.Y."/>
            <person name="Carninci P."/>
            <person name="Chao Q."/>
            <person name="Choy N."/>
            <person name="Enju A."/>
            <person name="Goldsmith A.D."/>
            <person name="Gurjal M."/>
            <person name="Hansen N.F."/>
            <person name="Hayashizaki Y."/>
            <person name="Johnson-Hopson C."/>
            <person name="Hsuan V.W."/>
            <person name="Iida K."/>
            <person name="Karnes M."/>
            <person name="Khan S."/>
            <person name="Koesema E."/>
            <person name="Ishida J."/>
            <person name="Jiang P.X."/>
            <person name="Jones T."/>
            <person name="Kawai J."/>
            <person name="Kamiya A."/>
            <person name="Meyers C."/>
            <person name="Nakajima M."/>
            <person name="Narusaka M."/>
            <person name="Seki M."/>
            <person name="Sakurai T."/>
            <person name="Satou M."/>
            <person name="Tamse R."/>
            <person name="Vaysberg M."/>
            <person name="Wallender E.K."/>
            <person name="Wong C."/>
            <person name="Yamamura Y."/>
            <person name="Yuan S."/>
            <person name="Shinozaki K."/>
            <person name="Davis R.W."/>
            <person name="Theologis A."/>
            <person name="Ecker J.R."/>
        </authorList>
    </citation>
    <scope>NUCLEOTIDE SEQUENCE [LARGE SCALE MRNA]</scope>
    <source>
        <strain>cv. Columbia</strain>
    </source>
</reference>
<reference key="5">
    <citation type="journal article" date="2014" name="Plant Physiol.">
        <title>The Arabidopsis ZINC FINGER PROTEIN3 interferes with abscisic acid and light signaling in seed germination and plant development.</title>
        <authorList>
            <person name="Joseph M.P."/>
            <person name="Papdi C."/>
            <person name="Kozma-Bognar L."/>
            <person name="Nagy I."/>
            <person name="Lopez-Carbonell M."/>
            <person name="Rigo G."/>
            <person name="Koncz C."/>
            <person name="Szabados L."/>
        </authorList>
    </citation>
    <scope>FUNCTION</scope>
</reference>
<organism>
    <name type="scientific">Arabidopsis thaliana</name>
    <name type="common">Mouse-ear cress</name>
    <dbReference type="NCBI Taxonomy" id="3702"/>
    <lineage>
        <taxon>Eukaryota</taxon>
        <taxon>Viridiplantae</taxon>
        <taxon>Streptophyta</taxon>
        <taxon>Embryophyta</taxon>
        <taxon>Tracheophyta</taxon>
        <taxon>Spermatophyta</taxon>
        <taxon>Magnoliopsida</taxon>
        <taxon>eudicotyledons</taxon>
        <taxon>Gunneridae</taxon>
        <taxon>Pentapetalae</taxon>
        <taxon>rosids</taxon>
        <taxon>malvids</taxon>
        <taxon>Brassicales</taxon>
        <taxon>Brassicaceae</taxon>
        <taxon>Camelineae</taxon>
        <taxon>Arabidopsis</taxon>
    </lineage>
</organism>
<evidence type="ECO:0000250" key="1">
    <source>
        <dbReference type="UniProtKB" id="Q39261"/>
    </source>
</evidence>
<evidence type="ECO:0000255" key="2">
    <source>
        <dbReference type="PROSITE-ProRule" id="PRU00042"/>
    </source>
</evidence>
<evidence type="ECO:0000256" key="3">
    <source>
        <dbReference type="SAM" id="MobiDB-lite"/>
    </source>
</evidence>
<evidence type="ECO:0000269" key="4">
    <source>
    </source>
</evidence>
<evidence type="ECO:0000303" key="5">
    <source>
    </source>
</evidence>
<evidence type="ECO:0000305" key="6"/>
<name>ZFP7_ARATH</name>
<comment type="function">
    <text evidence="4">Acts as a negative regulator of abscisic acid (ABA) signaling during germination and early seedling development.</text>
</comment>
<comment type="interaction">
    <interactant intactId="EBI-4426163">
        <id>Q39266</id>
    </interactant>
    <interactant intactId="EBI-4424877">
        <id>Q9S7W5</id>
        <label>TCP13</label>
    </interactant>
    <organismsDiffer>false</organismsDiffer>
    <experiments>3</experiments>
</comment>
<comment type="subcellular location">
    <subcellularLocation>
        <location evidence="1">Nucleus</location>
    </subcellularLocation>
</comment>
<comment type="miscellaneous">
    <text evidence="4">Seeds over-expressing ZFP7 are insensitive to inhibition of germination by abscisic acid (ABA).</text>
</comment>
<gene>
    <name evidence="5" type="primary">ZFP7</name>
    <name type="ordered locus">At1g24625</name>
    <name type="ORF">F21J9.29</name>
    <name type="ORF">F5A9.25</name>
</gene>
<accession>Q39266</accession>
<accession>O04755</accession>
<feature type="chain" id="PRO_0000047848" description="Zinc finger protein 7">
    <location>
        <begin position="1"/>
        <end position="209"/>
    </location>
</feature>
<feature type="zinc finger region" description="C2H2-type" evidence="2">
    <location>
        <begin position="59"/>
        <end position="81"/>
    </location>
</feature>
<feature type="region of interest" description="Disordered" evidence="3">
    <location>
        <begin position="1"/>
        <end position="32"/>
    </location>
</feature>
<sequence>MTESDDASRETPASRGGEASSNQDLSKPESNHVSLDLKLNDTFNDDTKSTKCEANPRVFSCNYCRRKFYSSQALGGHQNAHKRERTMAKRAMHMGRMFGHHHRPYTYTSSSLGMQAHSGLLHHTLSQPQPLVSRFHHQGYFGNTVPLFFDYDDGGSDFFWPGSFRQVVEEAEAPVVVVASTESGLDLNSVAANGGVDNNSSKPDLTLRL</sequence>
<dbReference type="EMBL" id="L39650">
    <property type="protein sequence ID" value="AAA87303.1"/>
    <property type="molecule type" value="mRNA"/>
</dbReference>
<dbReference type="EMBL" id="AC000103">
    <property type="protein sequence ID" value="AAF97972.1"/>
    <property type="molecule type" value="Genomic_DNA"/>
</dbReference>
<dbReference type="EMBL" id="AC004133">
    <property type="protein sequence ID" value="AAG03118.1"/>
    <property type="molecule type" value="Genomic_DNA"/>
</dbReference>
<dbReference type="EMBL" id="CP002684">
    <property type="protein sequence ID" value="AEE30555.1"/>
    <property type="molecule type" value="Genomic_DNA"/>
</dbReference>
<dbReference type="EMBL" id="BT005629">
    <property type="protein sequence ID" value="AAO64049.1"/>
    <property type="molecule type" value="mRNA"/>
</dbReference>
<dbReference type="PIR" id="S55887">
    <property type="entry name" value="S55887"/>
</dbReference>
<dbReference type="RefSeq" id="NP_564223.1">
    <property type="nucleotide sequence ID" value="NM_102305.2"/>
</dbReference>
<dbReference type="BioGRID" id="24315">
    <property type="interactions" value="21"/>
</dbReference>
<dbReference type="IntAct" id="Q39266">
    <property type="interactions" value="20"/>
</dbReference>
<dbReference type="STRING" id="3702.Q39266"/>
<dbReference type="PaxDb" id="3702-AT1G24625.1"/>
<dbReference type="ProteomicsDB" id="242924"/>
<dbReference type="EnsemblPlants" id="AT1G24625.1">
    <property type="protein sequence ID" value="AT1G24625.1"/>
    <property type="gene ID" value="AT1G24625"/>
</dbReference>
<dbReference type="GeneID" id="839077"/>
<dbReference type="Gramene" id="AT1G24625.1">
    <property type="protein sequence ID" value="AT1G24625.1"/>
    <property type="gene ID" value="AT1G24625"/>
</dbReference>
<dbReference type="KEGG" id="ath:AT1G24625"/>
<dbReference type="Araport" id="AT1G24625"/>
<dbReference type="TAIR" id="AT1G24625">
    <property type="gene designation" value="ZFP7"/>
</dbReference>
<dbReference type="eggNOG" id="ENOG502QTY7">
    <property type="taxonomic scope" value="Eukaryota"/>
</dbReference>
<dbReference type="HOGENOM" id="CLU_085865_1_0_1"/>
<dbReference type="InParanoid" id="Q39266"/>
<dbReference type="OMA" id="MAKRAMH"/>
<dbReference type="OrthoDB" id="1933825at2759"/>
<dbReference type="PhylomeDB" id="Q39266"/>
<dbReference type="PRO" id="PR:Q39266"/>
<dbReference type="Proteomes" id="UP000006548">
    <property type="component" value="Chromosome 1"/>
</dbReference>
<dbReference type="ExpressionAtlas" id="Q39266">
    <property type="expression patterns" value="baseline and differential"/>
</dbReference>
<dbReference type="GO" id="GO:0005634">
    <property type="term" value="C:nucleus"/>
    <property type="evidence" value="ECO:0007669"/>
    <property type="project" value="UniProtKB-SubCell"/>
</dbReference>
<dbReference type="GO" id="GO:0003700">
    <property type="term" value="F:DNA-binding transcription factor activity"/>
    <property type="evidence" value="ECO:0000250"/>
    <property type="project" value="TAIR"/>
</dbReference>
<dbReference type="GO" id="GO:0046982">
    <property type="term" value="F:protein heterodimerization activity"/>
    <property type="evidence" value="ECO:0000353"/>
    <property type="project" value="UniProtKB"/>
</dbReference>
<dbReference type="GO" id="GO:0000976">
    <property type="term" value="F:transcription cis-regulatory region binding"/>
    <property type="evidence" value="ECO:0000353"/>
    <property type="project" value="TAIR"/>
</dbReference>
<dbReference type="GO" id="GO:0008270">
    <property type="term" value="F:zinc ion binding"/>
    <property type="evidence" value="ECO:0007669"/>
    <property type="project" value="UniProtKB-KW"/>
</dbReference>
<dbReference type="GO" id="GO:0009738">
    <property type="term" value="P:abscisic acid-activated signaling pathway"/>
    <property type="evidence" value="ECO:0007669"/>
    <property type="project" value="UniProtKB-KW"/>
</dbReference>
<dbReference type="GO" id="GO:0019760">
    <property type="term" value="P:glucosinolate metabolic process"/>
    <property type="evidence" value="ECO:0000315"/>
    <property type="project" value="TAIR"/>
</dbReference>
<dbReference type="GO" id="GO:0009788">
    <property type="term" value="P:negative regulation of abscisic acid-activated signaling pathway"/>
    <property type="evidence" value="ECO:0000315"/>
    <property type="project" value="UniProtKB"/>
</dbReference>
<dbReference type="GO" id="GO:0006355">
    <property type="term" value="P:regulation of DNA-templated transcription"/>
    <property type="evidence" value="ECO:0000304"/>
    <property type="project" value="TAIR"/>
</dbReference>
<dbReference type="FunFam" id="3.30.160.60:FF:001366">
    <property type="entry name" value="Zinc finger protein 2"/>
    <property type="match status" value="1"/>
</dbReference>
<dbReference type="Gene3D" id="3.30.160.60">
    <property type="entry name" value="Classic Zinc Finger"/>
    <property type="match status" value="1"/>
</dbReference>
<dbReference type="InterPro" id="IPR053266">
    <property type="entry name" value="Zinc_finger_protein_7"/>
</dbReference>
<dbReference type="InterPro" id="IPR036236">
    <property type="entry name" value="Znf_C2H2_sf"/>
</dbReference>
<dbReference type="InterPro" id="IPR013087">
    <property type="entry name" value="Znf_C2H2_type"/>
</dbReference>
<dbReference type="PANTHER" id="PTHR47593:SF8">
    <property type="entry name" value="OS12G0581900 PROTEIN"/>
    <property type="match status" value="1"/>
</dbReference>
<dbReference type="PANTHER" id="PTHR47593">
    <property type="entry name" value="ZINC FINGER PROTEIN 4-LIKE"/>
    <property type="match status" value="1"/>
</dbReference>
<dbReference type="SUPFAM" id="SSF57667">
    <property type="entry name" value="beta-beta-alpha zinc fingers"/>
    <property type="match status" value="1"/>
</dbReference>
<dbReference type="PROSITE" id="PS00028">
    <property type="entry name" value="ZINC_FINGER_C2H2_1"/>
    <property type="match status" value="1"/>
</dbReference>
<dbReference type="PROSITE" id="PS50157">
    <property type="entry name" value="ZINC_FINGER_C2H2_2"/>
    <property type="match status" value="1"/>
</dbReference>
<proteinExistence type="evidence at protein level"/>
<protein>
    <recommendedName>
        <fullName evidence="6">Zinc finger protein 7</fullName>
    </recommendedName>
</protein>